<sequence>MRISSLLFLTFLAGIVQAQDFLAMFKPFLGGGGGGGNPFANPQAIGGLFQQFAGGNGGGFGQLLAGAMAPKPAPAAAGPRSAPAPTNEDYNTDIDVPAPKAKARAAPTPRRAQADAPPVYRQPRTKAEKIERFRNIARTFSPFVYEVNTTPAPHFDNFIWQQNAPAVTPEPFTFAPFSFPTLATVAPPAPGPGGPTLEPFLPTTASPKLLAHNTARMIREIASFSDGGRSRDQDFGAVQTLMQAFFEAVSSGNNGGAGAAAGAGTALGDAPMLQAHRDGTELGANRALTNKLFESDMVLTVKQMKAIVLAAQEARNPHGRKKRKVITGSVYRWKSVIPFRFKGGDAKWKKLIREGLGLWEKETCVRWSENGPGKDYVIFFRGSGCYSSVGRTGGSQLISIGYGCEDKGIVAHEVGHSLGFWHEQSRPDRDDYIHLRKDWIIKGTDGNFEKRSWEEIEDMGVPYDVGSVMHYGSNAFTKDWDQITIETKDSRYQGTIGQRQKLSFIDVKQVNRLYCNSVCPVALPCMHGGYPDPNNCAVCKCPDGLGGKLCGRAAKGTDHDKCGGELTATAEWQEMVYKGKRTCNWKVKSPSGGRVRLVLTELRYQCAPACKAYIEIKHNTDFQQTGFRVCCFNKTYDVISDQSEALILSNANIVDYEVSYKLQWIQDNGKALPPPKPTSTWVPGKENRPFRGVENSGGTIEKFILQAIPKIRDSHRPLESITSIVAEYGLATLLGISHNGK</sequence>
<proteinExistence type="inferred from homology"/>
<feature type="propeptide" id="PRO_0000442677" evidence="7">
    <location>
        <begin position="1"/>
        <end status="unknown"/>
    </location>
</feature>
<feature type="chain" id="PRO_0000028934" description="Zinc metalloproteinase nas-30">
    <location>
        <begin status="unknown"/>
        <end position="741"/>
    </location>
</feature>
<feature type="domain" description="Peptidase M12A" evidence="5">
    <location>
        <begin position="324"/>
        <end position="516"/>
    </location>
</feature>
<feature type="domain" description="EGF-like">
    <location>
        <begin position="539"/>
        <end position="550"/>
    </location>
</feature>
<feature type="domain" description="CUB" evidence="4">
    <location>
        <begin position="550"/>
        <end position="648"/>
    </location>
</feature>
<feature type="region of interest" description="Disordered" evidence="6">
    <location>
        <begin position="71"/>
        <end position="122"/>
    </location>
</feature>
<feature type="compositionally biased region" description="Low complexity" evidence="6">
    <location>
        <begin position="71"/>
        <end position="85"/>
    </location>
</feature>
<feature type="compositionally biased region" description="Low complexity" evidence="6">
    <location>
        <begin position="97"/>
        <end position="118"/>
    </location>
</feature>
<feature type="active site" evidence="5">
    <location>
        <position position="413"/>
    </location>
</feature>
<feature type="binding site" evidence="5">
    <location>
        <position position="412"/>
    </location>
    <ligand>
        <name>Zn(2+)</name>
        <dbReference type="ChEBI" id="CHEBI:29105"/>
        <note>catalytic</note>
    </ligand>
</feature>
<feature type="binding site" evidence="5">
    <location>
        <position position="416"/>
    </location>
    <ligand>
        <name>Zn(2+)</name>
        <dbReference type="ChEBI" id="CHEBI:29105"/>
        <note>catalytic</note>
    </ligand>
</feature>
<feature type="binding site" evidence="5">
    <location>
        <position position="422"/>
    </location>
    <ligand>
        <name>Zn(2+)</name>
        <dbReference type="ChEBI" id="CHEBI:29105"/>
        <note>catalytic</note>
    </ligand>
</feature>
<feature type="glycosylation site" description="N-linked (GlcNAc...) asparagine" evidence="3">
    <location>
        <position position="633"/>
    </location>
</feature>
<feature type="disulfide bond" evidence="5">
    <location>
        <begin position="364"/>
        <end position="515"/>
    </location>
</feature>
<feature type="disulfide bond" evidence="5">
    <location>
        <begin position="385"/>
        <end position="404"/>
    </location>
</feature>
<feature type="disulfide bond" evidence="1">
    <location>
        <begin position="519"/>
        <end position="539"/>
    </location>
</feature>
<feature type="disulfide bond" evidence="1">
    <location>
        <begin position="541"/>
        <end position="550"/>
    </location>
</feature>
<feature type="disulfide bond" evidence="1">
    <location>
        <begin position="562"/>
        <end position="583"/>
    </location>
</feature>
<feature type="disulfide bond" evidence="1">
    <location>
        <begin position="610"/>
        <end position="630"/>
    </location>
</feature>
<feature type="splice variant" id="VSP_060783" description="In isoform b." evidence="7">
    <original>ADAPPVYRQPRTKAE</original>
    <variation>GDDDDNIDMSLTRLG</variation>
    <location>
        <begin position="114"/>
        <end position="128"/>
    </location>
</feature>
<feature type="splice variant" id="VSP_060784" description="In isoform b." evidence="7">
    <location>
        <begin position="129"/>
        <end position="741"/>
    </location>
</feature>
<dbReference type="EC" id="3.4.24.-" evidence="2"/>
<dbReference type="EMBL" id="BX284601">
    <property type="protein sequence ID" value="CCD73542.1"/>
    <property type="molecule type" value="Genomic_DNA"/>
</dbReference>
<dbReference type="EMBL" id="BX284601">
    <property type="protein sequence ID" value="CCD73556.1"/>
    <property type="molecule type" value="Genomic_DNA"/>
</dbReference>
<dbReference type="RefSeq" id="NP_490794.1">
    <molecule id="Q9N2V2-2"/>
    <property type="nucleotide sequence ID" value="NM_058393.6"/>
</dbReference>
<dbReference type="RefSeq" id="NP_490795.5">
    <molecule id="Q9N2V2-1"/>
    <property type="nucleotide sequence ID" value="NM_058394.6"/>
</dbReference>
<dbReference type="SMR" id="Q9N2V2"/>
<dbReference type="IntAct" id="Q9N2V2">
    <property type="interactions" value="2"/>
</dbReference>
<dbReference type="STRING" id="6239.Y95B8A.1.1"/>
<dbReference type="MEROPS" id="M12.A46"/>
<dbReference type="GlyCosmos" id="Q9N2V2">
    <property type="glycosylation" value="1 site, No reported glycans"/>
</dbReference>
<dbReference type="PaxDb" id="6239-Y95B8A.1"/>
<dbReference type="PeptideAtlas" id="Q9N2V2"/>
<dbReference type="EnsemblMetazoa" id="Y95B8A.1a.1">
    <molecule id="Q9N2V2-1"/>
    <property type="protein sequence ID" value="Y95B8A.1a.1"/>
    <property type="gene ID" value="WBGene00003548"/>
</dbReference>
<dbReference type="EnsemblMetazoa" id="Y95B8A.1b.1">
    <molecule id="Q9N2V2-2"/>
    <property type="protein sequence ID" value="Y95B8A.1b.1"/>
    <property type="gene ID" value="WBGene00003548"/>
</dbReference>
<dbReference type="GeneID" id="190803"/>
<dbReference type="KEGG" id="cel:CELE_Y95B8A.1"/>
<dbReference type="UCSC" id="Y95B8A.1">
    <molecule id="Q9N2V2-1"/>
    <property type="organism name" value="c. elegans"/>
</dbReference>
<dbReference type="UCSC" id="Y95B8A.2">
    <property type="organism name" value="c. elegans"/>
</dbReference>
<dbReference type="AGR" id="WB:WBGene00003548"/>
<dbReference type="CTD" id="190803"/>
<dbReference type="WormBase" id="Y95B8A.1a">
    <molecule id="Q9N2V2-1"/>
    <property type="protein sequence ID" value="CE54010"/>
    <property type="gene ID" value="WBGene00003548"/>
    <property type="gene designation" value="nas-30"/>
</dbReference>
<dbReference type="WormBase" id="Y95B8A.1b">
    <molecule id="Q9N2V2-2"/>
    <property type="protein sequence ID" value="CE24691"/>
    <property type="gene ID" value="WBGene00003548"/>
    <property type="gene designation" value="nas-30"/>
</dbReference>
<dbReference type="eggNOG" id="KOG3714">
    <property type="taxonomic scope" value="Eukaryota"/>
</dbReference>
<dbReference type="GeneTree" id="ENSGT00940000167997"/>
<dbReference type="HOGENOM" id="CLU_017286_6_0_1"/>
<dbReference type="InParanoid" id="Q9N2V2"/>
<dbReference type="OMA" id="EDYNTDF"/>
<dbReference type="OrthoDB" id="291007at2759"/>
<dbReference type="PhylomeDB" id="Q9N2V2"/>
<dbReference type="PRO" id="PR:Q9N2V2"/>
<dbReference type="Proteomes" id="UP000001940">
    <property type="component" value="Chromosome I"/>
</dbReference>
<dbReference type="Bgee" id="WBGene00022383">
    <property type="expression patterns" value="Expressed in larva and 3 other cell types or tissues"/>
</dbReference>
<dbReference type="ExpressionAtlas" id="Q9N2V2">
    <property type="expression patterns" value="baseline and differential"/>
</dbReference>
<dbReference type="GO" id="GO:0004222">
    <property type="term" value="F:metalloendopeptidase activity"/>
    <property type="evidence" value="ECO:0000318"/>
    <property type="project" value="GO_Central"/>
</dbReference>
<dbReference type="GO" id="GO:0008270">
    <property type="term" value="F:zinc ion binding"/>
    <property type="evidence" value="ECO:0007669"/>
    <property type="project" value="InterPro"/>
</dbReference>
<dbReference type="GO" id="GO:0006508">
    <property type="term" value="P:proteolysis"/>
    <property type="evidence" value="ECO:0007669"/>
    <property type="project" value="UniProtKB-KW"/>
</dbReference>
<dbReference type="CDD" id="cd04280">
    <property type="entry name" value="ZnMc_astacin_like"/>
    <property type="match status" value="1"/>
</dbReference>
<dbReference type="FunFam" id="3.40.390.10:FF:000028">
    <property type="entry name" value="Zinc metalloproteinase"/>
    <property type="match status" value="1"/>
</dbReference>
<dbReference type="Gene3D" id="3.40.390.10">
    <property type="entry name" value="Collagenase (Catalytic Domain)"/>
    <property type="match status" value="1"/>
</dbReference>
<dbReference type="Gene3D" id="2.60.120.290">
    <property type="entry name" value="Spermadhesin, CUB domain"/>
    <property type="match status" value="1"/>
</dbReference>
<dbReference type="InterPro" id="IPR034035">
    <property type="entry name" value="Astacin-like_dom"/>
</dbReference>
<dbReference type="InterPro" id="IPR000859">
    <property type="entry name" value="CUB_dom"/>
</dbReference>
<dbReference type="InterPro" id="IPR024079">
    <property type="entry name" value="MetalloPept_cat_dom_sf"/>
</dbReference>
<dbReference type="InterPro" id="IPR001506">
    <property type="entry name" value="Peptidase_M12A"/>
</dbReference>
<dbReference type="InterPro" id="IPR006026">
    <property type="entry name" value="Peptidase_Metallo"/>
</dbReference>
<dbReference type="InterPro" id="IPR035914">
    <property type="entry name" value="Sperma_CUB_dom_sf"/>
</dbReference>
<dbReference type="PANTHER" id="PTHR10127">
    <property type="entry name" value="DISCOIDIN, CUB, EGF, LAMININ , AND ZINC METALLOPROTEASE DOMAIN CONTAINING"/>
    <property type="match status" value="1"/>
</dbReference>
<dbReference type="PANTHER" id="PTHR10127:SF898">
    <property type="entry name" value="ZINC METALLOPROTEINASE NAS-30"/>
    <property type="match status" value="1"/>
</dbReference>
<dbReference type="Pfam" id="PF01400">
    <property type="entry name" value="Astacin"/>
    <property type="match status" value="1"/>
</dbReference>
<dbReference type="PRINTS" id="PR00480">
    <property type="entry name" value="ASTACIN"/>
</dbReference>
<dbReference type="SMART" id="SM00042">
    <property type="entry name" value="CUB"/>
    <property type="match status" value="1"/>
</dbReference>
<dbReference type="SMART" id="SM00235">
    <property type="entry name" value="ZnMc"/>
    <property type="match status" value="1"/>
</dbReference>
<dbReference type="SUPFAM" id="SSF55486">
    <property type="entry name" value="Metalloproteases ('zincins'), catalytic domain"/>
    <property type="match status" value="1"/>
</dbReference>
<dbReference type="SUPFAM" id="SSF49854">
    <property type="entry name" value="Spermadhesin, CUB domain"/>
    <property type="match status" value="1"/>
</dbReference>
<dbReference type="PROSITE" id="PS51864">
    <property type="entry name" value="ASTACIN"/>
    <property type="match status" value="1"/>
</dbReference>
<dbReference type="PROSITE" id="PS00022">
    <property type="entry name" value="EGF_1"/>
    <property type="match status" value="1"/>
</dbReference>
<dbReference type="PROSITE" id="PS00142">
    <property type="entry name" value="ZINC_PROTEASE"/>
    <property type="match status" value="1"/>
</dbReference>
<evidence type="ECO:0000250" key="1"/>
<evidence type="ECO:0000250" key="2">
    <source>
        <dbReference type="UniProtKB" id="A8Q2D1"/>
    </source>
</evidence>
<evidence type="ECO:0000255" key="3"/>
<evidence type="ECO:0000255" key="4">
    <source>
        <dbReference type="PROSITE-ProRule" id="PRU00059"/>
    </source>
</evidence>
<evidence type="ECO:0000255" key="5">
    <source>
        <dbReference type="PROSITE-ProRule" id="PRU01211"/>
    </source>
</evidence>
<evidence type="ECO:0000256" key="6">
    <source>
        <dbReference type="SAM" id="MobiDB-lite"/>
    </source>
</evidence>
<evidence type="ECO:0000305" key="7"/>
<evidence type="ECO:0000312" key="8">
    <source>
        <dbReference type="WormBase" id="Y95B8A.1a"/>
    </source>
</evidence>
<evidence type="ECO:0000312" key="9">
    <source>
        <dbReference type="WormBase" id="Y95B8A.1b"/>
    </source>
</evidence>
<gene>
    <name evidence="8" type="primary">nas-30</name>
    <name evidence="8" type="ORF">Y95B8A.1</name>
</gene>
<accession>Q9N2V2</accession>
<accession>Q9N2V3</accession>
<protein>
    <recommendedName>
        <fullName>Zinc metalloproteinase nas-30</fullName>
        <ecNumber evidence="2">3.4.24.-</ecNumber>
    </recommendedName>
    <alternativeName>
        <fullName>Nematode astacin 30</fullName>
    </alternativeName>
</protein>
<organism>
    <name type="scientific">Caenorhabditis elegans</name>
    <dbReference type="NCBI Taxonomy" id="6239"/>
    <lineage>
        <taxon>Eukaryota</taxon>
        <taxon>Metazoa</taxon>
        <taxon>Ecdysozoa</taxon>
        <taxon>Nematoda</taxon>
        <taxon>Chromadorea</taxon>
        <taxon>Rhabditida</taxon>
        <taxon>Rhabditina</taxon>
        <taxon>Rhabditomorpha</taxon>
        <taxon>Rhabditoidea</taxon>
        <taxon>Rhabditidae</taxon>
        <taxon>Peloderinae</taxon>
        <taxon>Caenorhabditis</taxon>
    </lineage>
</organism>
<comment type="function">
    <text evidence="2">Metalloprotease.</text>
</comment>
<comment type="cofactor">
    <cofactor evidence="5">
        <name>Zn(2+)</name>
        <dbReference type="ChEBI" id="CHEBI:29105"/>
    </cofactor>
    <text evidence="5">Binds 1 zinc ion per subunit.</text>
</comment>
<comment type="alternative products">
    <event type="alternative splicing"/>
    <isoform>
        <id>Q9N2V2-1</id>
        <name evidence="8">a</name>
        <sequence type="displayed"/>
    </isoform>
    <isoform>
        <id>Q9N2V2-2</id>
        <name evidence="9">b</name>
        <sequence type="described" ref="VSP_060783 VSP_060784"/>
    </isoform>
</comment>
<reference key="1">
    <citation type="journal article" date="1998" name="Science">
        <title>Genome sequence of the nematode C. elegans: a platform for investigating biology.</title>
        <authorList>
            <consortium name="The C. elegans sequencing consortium"/>
        </authorList>
    </citation>
    <scope>NUCLEOTIDE SEQUENCE [LARGE SCALE GENOMIC DNA]</scope>
    <source>
        <strain>Bristol N2</strain>
    </source>
</reference>
<reference key="2">
    <citation type="journal article" date="2003" name="Eur. J. Biochem.">
        <title>The astacin protein family in Caenorhabditis elegans.</title>
        <authorList>
            <person name="Moehrlen F."/>
            <person name="Hutter H."/>
            <person name="Zwilling R."/>
        </authorList>
    </citation>
    <scope>IDENTIFICATION</scope>
    <scope>NOMENCLATURE</scope>
</reference>
<keyword id="KW-0025">Alternative splicing</keyword>
<keyword id="KW-1015">Disulfide bond</keyword>
<keyword id="KW-0245">EGF-like domain</keyword>
<keyword id="KW-0325">Glycoprotein</keyword>
<keyword id="KW-0378">Hydrolase</keyword>
<keyword id="KW-0479">Metal-binding</keyword>
<keyword id="KW-0482">Metalloprotease</keyword>
<keyword id="KW-0645">Protease</keyword>
<keyword id="KW-1185">Reference proteome</keyword>
<keyword id="KW-0862">Zinc</keyword>
<keyword id="KW-0865">Zymogen</keyword>
<name>NAS30_CAEEL</name>